<sequence length="208" mass="23017">MKYIEIDEELYRFIASKTERIGESASDILRRLLNLSVENVDVSLPTDISHPSLESQSPVNRHPVFDQAKAAVEKVIADQNSANEHYPVDEDIASSTSIDFDAMVSQHLLSQQKGAVGRFMYLLSSLESTAGSDFDKVLNVQGKGRLYFARSKQALLNSSKSSNPKEIASSGFWVTTNNNTAKKQTILTEVLEHLGCDSERAKSIAEHI</sequence>
<reference key="1">
    <citation type="submission" date="2006-08" db="EMBL/GenBank/DDBJ databases">
        <title>Complete sequence of Shewanella frigidimarina NCIMB 400.</title>
        <authorList>
            <consortium name="US DOE Joint Genome Institute"/>
            <person name="Copeland A."/>
            <person name="Lucas S."/>
            <person name="Lapidus A."/>
            <person name="Barry K."/>
            <person name="Detter J.C."/>
            <person name="Glavina del Rio T."/>
            <person name="Hammon N."/>
            <person name="Israni S."/>
            <person name="Dalin E."/>
            <person name="Tice H."/>
            <person name="Pitluck S."/>
            <person name="Fredrickson J.K."/>
            <person name="Kolker E."/>
            <person name="McCuel L.A."/>
            <person name="DiChristina T."/>
            <person name="Nealson K.H."/>
            <person name="Newman D."/>
            <person name="Tiedje J.M."/>
            <person name="Zhou J."/>
            <person name="Romine M.F."/>
            <person name="Culley D.E."/>
            <person name="Serres M."/>
            <person name="Chertkov O."/>
            <person name="Brettin T."/>
            <person name="Bruce D."/>
            <person name="Han C."/>
            <person name="Tapia R."/>
            <person name="Gilna P."/>
            <person name="Schmutz J."/>
            <person name="Larimer F."/>
            <person name="Land M."/>
            <person name="Hauser L."/>
            <person name="Kyrpides N."/>
            <person name="Mikhailova N."/>
            <person name="Richardson P."/>
        </authorList>
    </citation>
    <scope>NUCLEOTIDE SEQUENCE [LARGE SCALE GENOMIC DNA]</scope>
    <source>
        <strain>NCIMB 400</strain>
    </source>
</reference>
<feature type="chain" id="PRO_0000413937" description="Negative modulator of initiation of replication">
    <location>
        <begin position="1"/>
        <end position="208"/>
    </location>
</feature>
<feature type="region of interest" description="Interaction with DNA" evidence="1">
    <location>
        <begin position="115"/>
        <end position="116"/>
    </location>
</feature>
<comment type="function">
    <text evidence="1">Negative regulator of replication initiation, which contributes to regulation of DNA replication and ensures that replication initiation occurs exactly once per chromosome per cell cycle. Binds to pairs of hemimethylated GATC sequences in the oriC region, thus preventing assembly of replication proteins and re-initiation at newly replicated origins. Repression is relieved when the region becomes fully methylated.</text>
</comment>
<comment type="subunit">
    <text evidence="1">Homodimer. Polymerizes to form helical filaments.</text>
</comment>
<comment type="subcellular location">
    <subcellularLocation>
        <location evidence="1">Cytoplasm</location>
    </subcellularLocation>
</comment>
<comment type="similarity">
    <text evidence="1">Belongs to the SeqA family.</text>
</comment>
<evidence type="ECO:0000255" key="1">
    <source>
        <dbReference type="HAMAP-Rule" id="MF_00908"/>
    </source>
</evidence>
<name>SEQA_SHEFN</name>
<accession>Q082Q5</accession>
<proteinExistence type="inferred from homology"/>
<gene>
    <name evidence="1" type="primary">seqA</name>
    <name type="ordered locus">Sfri_1914</name>
</gene>
<protein>
    <recommendedName>
        <fullName evidence="1">Negative modulator of initiation of replication</fullName>
    </recommendedName>
</protein>
<keyword id="KW-0963">Cytoplasm</keyword>
<keyword id="KW-0236">DNA replication inhibitor</keyword>
<keyword id="KW-0238">DNA-binding</keyword>
<keyword id="KW-1185">Reference proteome</keyword>
<dbReference type="EMBL" id="CP000447">
    <property type="protein sequence ID" value="ABI71760.1"/>
    <property type="molecule type" value="Genomic_DNA"/>
</dbReference>
<dbReference type="RefSeq" id="WP_011637375.1">
    <property type="nucleotide sequence ID" value="NC_008345.1"/>
</dbReference>
<dbReference type="SMR" id="Q082Q5"/>
<dbReference type="STRING" id="318167.Sfri_1914"/>
<dbReference type="KEGG" id="sfr:Sfri_1914"/>
<dbReference type="eggNOG" id="COG3057">
    <property type="taxonomic scope" value="Bacteria"/>
</dbReference>
<dbReference type="HOGENOM" id="CLU_099733_0_0_6"/>
<dbReference type="OrthoDB" id="5591069at2"/>
<dbReference type="Proteomes" id="UP000000684">
    <property type="component" value="Chromosome"/>
</dbReference>
<dbReference type="GO" id="GO:0005737">
    <property type="term" value="C:cytoplasm"/>
    <property type="evidence" value="ECO:0007669"/>
    <property type="project" value="UniProtKB-SubCell"/>
</dbReference>
<dbReference type="GO" id="GO:0003677">
    <property type="term" value="F:DNA binding"/>
    <property type="evidence" value="ECO:0007669"/>
    <property type="project" value="UniProtKB-UniRule"/>
</dbReference>
<dbReference type="GO" id="GO:0032297">
    <property type="term" value="P:negative regulation of DNA-templated DNA replication initiation"/>
    <property type="evidence" value="ECO:0007669"/>
    <property type="project" value="UniProtKB-UniRule"/>
</dbReference>
<dbReference type="GO" id="GO:0006355">
    <property type="term" value="P:regulation of DNA-templated transcription"/>
    <property type="evidence" value="ECO:0007669"/>
    <property type="project" value="InterPro"/>
</dbReference>
<dbReference type="Gene3D" id="1.10.1220.10">
    <property type="entry name" value="Met repressor-like"/>
    <property type="match status" value="1"/>
</dbReference>
<dbReference type="Gene3D" id="1.20.1380.10">
    <property type="entry name" value="Replication modulator SeqA, C-terminal DNA-binding domain"/>
    <property type="match status" value="1"/>
</dbReference>
<dbReference type="HAMAP" id="MF_00908">
    <property type="entry name" value="SeqA"/>
    <property type="match status" value="1"/>
</dbReference>
<dbReference type="InterPro" id="IPR013321">
    <property type="entry name" value="Arc_rbn_hlx_hlx"/>
</dbReference>
<dbReference type="InterPro" id="IPR010985">
    <property type="entry name" value="Ribbon_hlx_hlx"/>
</dbReference>
<dbReference type="InterPro" id="IPR005621">
    <property type="entry name" value="SeqA"/>
</dbReference>
<dbReference type="InterPro" id="IPR026577">
    <property type="entry name" value="SeqA_DNA-bd_C"/>
</dbReference>
<dbReference type="InterPro" id="IPR036835">
    <property type="entry name" value="SeqA_DNA-bd_C_sf"/>
</dbReference>
<dbReference type="InterPro" id="IPR033761">
    <property type="entry name" value="SeqA_N"/>
</dbReference>
<dbReference type="NCBIfam" id="NF008389">
    <property type="entry name" value="PRK11187.1"/>
    <property type="match status" value="1"/>
</dbReference>
<dbReference type="Pfam" id="PF03925">
    <property type="entry name" value="SeqA"/>
    <property type="match status" value="1"/>
</dbReference>
<dbReference type="Pfam" id="PF17206">
    <property type="entry name" value="SeqA_N"/>
    <property type="match status" value="1"/>
</dbReference>
<dbReference type="PIRSF" id="PIRSF019401">
    <property type="entry name" value="SeqA"/>
    <property type="match status" value="1"/>
</dbReference>
<dbReference type="SUPFAM" id="SSF82808">
    <property type="entry name" value="Replication modulator SeqA, C-terminal DNA-binding domain"/>
    <property type="match status" value="1"/>
</dbReference>
<dbReference type="SUPFAM" id="SSF47598">
    <property type="entry name" value="Ribbon-helix-helix"/>
    <property type="match status" value="1"/>
</dbReference>
<organism>
    <name type="scientific">Shewanella frigidimarina (strain NCIMB 400)</name>
    <dbReference type="NCBI Taxonomy" id="318167"/>
    <lineage>
        <taxon>Bacteria</taxon>
        <taxon>Pseudomonadati</taxon>
        <taxon>Pseudomonadota</taxon>
        <taxon>Gammaproteobacteria</taxon>
        <taxon>Alteromonadales</taxon>
        <taxon>Shewanellaceae</taxon>
        <taxon>Shewanella</taxon>
    </lineage>
</organism>